<name>RL18_THEVB</name>
<sequence length="120" mass="13294">MKQTRTAARQSRHQRIRRKVKGTSDRPRLAVFRSHQHIYAQVIDDTRHHTLVAASSLEPELRQKLGKGSTCAASIAVGRLIAERAKAAGIERVVFDRGGNIYHGRVKALADAAREGGLDF</sequence>
<organism>
    <name type="scientific">Thermosynechococcus vestitus (strain NIES-2133 / IAM M-273 / BP-1)</name>
    <dbReference type="NCBI Taxonomy" id="197221"/>
    <lineage>
        <taxon>Bacteria</taxon>
        <taxon>Bacillati</taxon>
        <taxon>Cyanobacteriota</taxon>
        <taxon>Cyanophyceae</taxon>
        <taxon>Acaryochloridales</taxon>
        <taxon>Thermosynechococcaceae</taxon>
        <taxon>Thermosynechococcus</taxon>
    </lineage>
</organism>
<comment type="function">
    <text evidence="1">This is one of the proteins that bind and probably mediate the attachment of the 5S RNA into the large ribosomal subunit, where it forms part of the central protuberance.</text>
</comment>
<comment type="subunit">
    <text evidence="1">Part of the 50S ribosomal subunit; part of the 5S rRNA/L5/L18/L25 subcomplex. Contacts the 5S and 23S rRNAs.</text>
</comment>
<comment type="similarity">
    <text evidence="1">Belongs to the universal ribosomal protein uL18 family.</text>
</comment>
<gene>
    <name evidence="1" type="primary">rplR</name>
    <name evidence="1" type="synonym">rpl18</name>
    <name type="ordered locus">tlr0096</name>
</gene>
<dbReference type="EMBL" id="BA000039">
    <property type="protein sequence ID" value="BAC07649.1"/>
    <property type="molecule type" value="Genomic_DNA"/>
</dbReference>
<dbReference type="RefSeq" id="NP_680887.1">
    <property type="nucleotide sequence ID" value="NC_004113.1"/>
</dbReference>
<dbReference type="RefSeq" id="WP_011055951.1">
    <property type="nucleotide sequence ID" value="NC_004113.1"/>
</dbReference>
<dbReference type="SMR" id="Q8DML7"/>
<dbReference type="STRING" id="197221.gene:10746674"/>
<dbReference type="EnsemblBacteria" id="BAC07649">
    <property type="protein sequence ID" value="BAC07649"/>
    <property type="gene ID" value="BAC07649"/>
</dbReference>
<dbReference type="KEGG" id="tel:tlr0096"/>
<dbReference type="PATRIC" id="fig|197221.4.peg.99"/>
<dbReference type="eggNOG" id="COG0256">
    <property type="taxonomic scope" value="Bacteria"/>
</dbReference>
<dbReference type="Proteomes" id="UP000000440">
    <property type="component" value="Chromosome"/>
</dbReference>
<dbReference type="GO" id="GO:0022625">
    <property type="term" value="C:cytosolic large ribosomal subunit"/>
    <property type="evidence" value="ECO:0007669"/>
    <property type="project" value="TreeGrafter"/>
</dbReference>
<dbReference type="GO" id="GO:0008097">
    <property type="term" value="F:5S rRNA binding"/>
    <property type="evidence" value="ECO:0007669"/>
    <property type="project" value="TreeGrafter"/>
</dbReference>
<dbReference type="GO" id="GO:0003735">
    <property type="term" value="F:structural constituent of ribosome"/>
    <property type="evidence" value="ECO:0007669"/>
    <property type="project" value="InterPro"/>
</dbReference>
<dbReference type="GO" id="GO:0006412">
    <property type="term" value="P:translation"/>
    <property type="evidence" value="ECO:0007669"/>
    <property type="project" value="UniProtKB-UniRule"/>
</dbReference>
<dbReference type="CDD" id="cd00432">
    <property type="entry name" value="Ribosomal_L18_L5e"/>
    <property type="match status" value="1"/>
</dbReference>
<dbReference type="FunFam" id="3.30.420.100:FF:000001">
    <property type="entry name" value="50S ribosomal protein L18"/>
    <property type="match status" value="1"/>
</dbReference>
<dbReference type="Gene3D" id="3.30.420.100">
    <property type="match status" value="1"/>
</dbReference>
<dbReference type="HAMAP" id="MF_01337_B">
    <property type="entry name" value="Ribosomal_uL18_B"/>
    <property type="match status" value="1"/>
</dbReference>
<dbReference type="InterPro" id="IPR004389">
    <property type="entry name" value="Ribosomal_uL18_bac-type"/>
</dbReference>
<dbReference type="InterPro" id="IPR005484">
    <property type="entry name" value="Ribosomal_uL18_bac/euk"/>
</dbReference>
<dbReference type="NCBIfam" id="TIGR00060">
    <property type="entry name" value="L18_bact"/>
    <property type="match status" value="1"/>
</dbReference>
<dbReference type="PANTHER" id="PTHR12899">
    <property type="entry name" value="39S RIBOSOMAL PROTEIN L18, MITOCHONDRIAL"/>
    <property type="match status" value="1"/>
</dbReference>
<dbReference type="PANTHER" id="PTHR12899:SF3">
    <property type="entry name" value="LARGE RIBOSOMAL SUBUNIT PROTEIN UL18M"/>
    <property type="match status" value="1"/>
</dbReference>
<dbReference type="Pfam" id="PF00861">
    <property type="entry name" value="Ribosomal_L18p"/>
    <property type="match status" value="1"/>
</dbReference>
<dbReference type="SUPFAM" id="SSF53137">
    <property type="entry name" value="Translational machinery components"/>
    <property type="match status" value="1"/>
</dbReference>
<evidence type="ECO:0000255" key="1">
    <source>
        <dbReference type="HAMAP-Rule" id="MF_01337"/>
    </source>
</evidence>
<evidence type="ECO:0000256" key="2">
    <source>
        <dbReference type="SAM" id="MobiDB-lite"/>
    </source>
</evidence>
<evidence type="ECO:0000305" key="3"/>
<accession>Q8DML7</accession>
<reference key="1">
    <citation type="journal article" date="2002" name="DNA Res.">
        <title>Complete genome structure of the thermophilic cyanobacterium Thermosynechococcus elongatus BP-1.</title>
        <authorList>
            <person name="Nakamura Y."/>
            <person name="Kaneko T."/>
            <person name="Sato S."/>
            <person name="Ikeuchi M."/>
            <person name="Katoh H."/>
            <person name="Sasamoto S."/>
            <person name="Watanabe A."/>
            <person name="Iriguchi M."/>
            <person name="Kawashima K."/>
            <person name="Kimura T."/>
            <person name="Kishida Y."/>
            <person name="Kiyokawa C."/>
            <person name="Kohara M."/>
            <person name="Matsumoto M."/>
            <person name="Matsuno A."/>
            <person name="Nakazaki N."/>
            <person name="Shimpo S."/>
            <person name="Sugimoto M."/>
            <person name="Takeuchi C."/>
            <person name="Yamada M."/>
            <person name="Tabata S."/>
        </authorList>
    </citation>
    <scope>NUCLEOTIDE SEQUENCE [LARGE SCALE GENOMIC DNA]</scope>
    <source>
        <strain>NIES-2133 / IAM M-273 / BP-1</strain>
    </source>
</reference>
<protein>
    <recommendedName>
        <fullName evidence="1">Large ribosomal subunit protein uL18</fullName>
    </recommendedName>
    <alternativeName>
        <fullName evidence="3">50S ribosomal protein L18</fullName>
    </alternativeName>
</protein>
<feature type="chain" id="PRO_0000131366" description="Large ribosomal subunit protein uL18">
    <location>
        <begin position="1"/>
        <end position="120"/>
    </location>
</feature>
<feature type="region of interest" description="Disordered" evidence="2">
    <location>
        <begin position="1"/>
        <end position="25"/>
    </location>
</feature>
<feature type="compositionally biased region" description="Basic residues" evidence="2">
    <location>
        <begin position="10"/>
        <end position="21"/>
    </location>
</feature>
<keyword id="KW-1185">Reference proteome</keyword>
<keyword id="KW-0687">Ribonucleoprotein</keyword>
<keyword id="KW-0689">Ribosomal protein</keyword>
<keyword id="KW-0694">RNA-binding</keyword>
<keyword id="KW-0699">rRNA-binding</keyword>
<proteinExistence type="inferred from homology"/>